<protein>
    <recommendedName>
        <fullName>T-cell-specific surface glycoprotein CD28</fullName>
    </recommendedName>
    <cdAntigenName>CD28</cdAntigenName>
</protein>
<comment type="function">
    <text evidence="2 5">Receptor that plays a role in T-cell activation, proliferation, survival and the maintenance of immune homeostasis (PubMed:7688139). Functions not only as an amplifier of TCR signals but delivers unique signals that control intracellular biochemical events that alter the gene expression program of T-cells. Stimulation upon engagement of its cognate ligands CD80 or CD86 increases proliferation and expression of various cytokines in particular IL2 production in both CD4(+) and CD8(+) T-cell subsets. Mechanistically, ligation induces recruitment of protein kinase C-theta/PRKCQ and GRB2 leading to NF-kappa-B activation via both PI3K/Akt-dependent and -independent pathways. In conjunction with TCR/CD3 ligation and CD40L costimulation, enhances the production of IL4 and IL10 in T-cells.</text>
</comment>
<comment type="subunit">
    <text evidence="2">Homodimer; disulfide-linked (PubMed:7688139). Interacts with DUSP14. Binds to CD80/B7-1 and CD86/B7-2/B70. Interacts with GRB2. Interacts with PIK3R1. Interacts with PRKCQ.</text>
</comment>
<comment type="subcellular location">
    <subcellularLocation>
        <location evidence="4">Cell membrane</location>
        <topology evidence="2">Single-pass type I membrane protein</topology>
    </subcellularLocation>
</comment>
<comment type="PTM">
    <text evidence="2 4">Phosphorylated by LCK (PubMed:27460989). Dephosphorylated by PTPN11 (By similarity).</text>
</comment>
<comment type="disruption phenotype">
    <text evidence="5">Cd28-deletion mice have some defects in germinal center reactions and antibody class switch recombination, but in principle are still able to mount cytotoxic T-cell responses to certain viruses. However, T-lymphocytes show impaired responses to lectins with a lack of interleukin-2 (IL-2) production.</text>
</comment>
<accession>P31041</accession>
<accession>Q6GSH7</accession>
<dbReference type="EMBL" id="M34563">
    <property type="protein sequence ID" value="AAA37395.1"/>
    <property type="molecule type" value="mRNA"/>
</dbReference>
<dbReference type="EMBL" id="AL646054">
    <property type="status" value="NOT_ANNOTATED_CDS"/>
    <property type="molecule type" value="Genomic_DNA"/>
</dbReference>
<dbReference type="EMBL" id="AL672024">
    <property type="status" value="NOT_ANNOTATED_CDS"/>
    <property type="molecule type" value="Genomic_DNA"/>
</dbReference>
<dbReference type="EMBL" id="CR936842">
    <property type="protein sequence ID" value="CAM13249.1"/>
    <property type="molecule type" value="Genomic_DNA"/>
</dbReference>
<dbReference type="EMBL" id="CH466548">
    <property type="protein sequence ID" value="EDL00156.1"/>
    <property type="molecule type" value="Genomic_DNA"/>
</dbReference>
<dbReference type="EMBL" id="BC064058">
    <property type="protein sequence ID" value="AAH64058.1"/>
    <property type="molecule type" value="mRNA"/>
</dbReference>
<dbReference type="EMBL" id="M74361">
    <property type="protein sequence ID" value="AAA37396.1"/>
    <property type="molecule type" value="mRNA"/>
</dbReference>
<dbReference type="CCDS" id="CCDS14992.1"/>
<dbReference type="PIR" id="A43523">
    <property type="entry name" value="A43523"/>
</dbReference>
<dbReference type="PIR" id="I49584">
    <property type="entry name" value="I49584"/>
</dbReference>
<dbReference type="RefSeq" id="NP_031668.3">
    <property type="nucleotide sequence ID" value="NM_007642.4"/>
</dbReference>
<dbReference type="PDB" id="2NAE">
    <property type="method" value="NMR"/>
    <property type="chains" value="A=177-218"/>
</dbReference>
<dbReference type="PDBsum" id="2NAE"/>
<dbReference type="SMR" id="P31041"/>
<dbReference type="DIP" id="DIP-60858N"/>
<dbReference type="FunCoup" id="P31041">
    <property type="interactions" value="330"/>
</dbReference>
<dbReference type="IntAct" id="P31041">
    <property type="interactions" value="3"/>
</dbReference>
<dbReference type="STRING" id="10090.ENSMUSP00000027165"/>
<dbReference type="GlyCosmos" id="P31041">
    <property type="glycosylation" value="4 sites, No reported glycans"/>
</dbReference>
<dbReference type="GlyGen" id="P31041">
    <property type="glycosylation" value="5 sites, 2 N-linked glycans (2 sites)"/>
</dbReference>
<dbReference type="iPTMnet" id="P31041"/>
<dbReference type="PhosphoSitePlus" id="P31041"/>
<dbReference type="SwissPalm" id="P31041"/>
<dbReference type="PaxDb" id="10090-ENSMUSP00000027165"/>
<dbReference type="PeptideAtlas" id="P31041"/>
<dbReference type="ProteomicsDB" id="280017"/>
<dbReference type="Antibodypedia" id="19958">
    <property type="antibodies" value="3184 antibodies from 49 providers"/>
</dbReference>
<dbReference type="DNASU" id="12487"/>
<dbReference type="Ensembl" id="ENSMUST00000027165.3">
    <property type="protein sequence ID" value="ENSMUSP00000027165.3"/>
    <property type="gene ID" value="ENSMUSG00000026012.3"/>
</dbReference>
<dbReference type="GeneID" id="12487"/>
<dbReference type="KEGG" id="mmu:12487"/>
<dbReference type="UCSC" id="uc007bev.2">
    <property type="organism name" value="mouse"/>
</dbReference>
<dbReference type="AGR" id="MGI:88327"/>
<dbReference type="CTD" id="940"/>
<dbReference type="MGI" id="MGI:88327">
    <property type="gene designation" value="Cd28"/>
</dbReference>
<dbReference type="VEuPathDB" id="HostDB:ENSMUSG00000026012"/>
<dbReference type="eggNOG" id="ENOG502SAVP">
    <property type="taxonomic scope" value="Eukaryota"/>
</dbReference>
<dbReference type="GeneTree" id="ENSGT00530000063873"/>
<dbReference type="HOGENOM" id="CLU_085095_1_0_1"/>
<dbReference type="InParanoid" id="P31041"/>
<dbReference type="OMA" id="YSHQLQF"/>
<dbReference type="OrthoDB" id="8654606at2759"/>
<dbReference type="PhylomeDB" id="P31041"/>
<dbReference type="TreeFam" id="TF335679"/>
<dbReference type="Reactome" id="R-MMU-1257604">
    <property type="pathway name" value="PIP3 activates AKT signaling"/>
</dbReference>
<dbReference type="Reactome" id="R-MMU-389356">
    <property type="pathway name" value="Co-stimulation by CD28"/>
</dbReference>
<dbReference type="Reactome" id="R-MMU-389357">
    <property type="pathway name" value="CD28 dependent PI3K/Akt signaling"/>
</dbReference>
<dbReference type="Reactome" id="R-MMU-389359">
    <property type="pathway name" value="CD28 dependent Vav1 pathway"/>
</dbReference>
<dbReference type="Reactome" id="R-MMU-6811558">
    <property type="pathway name" value="PI5P, PP2A and IER3 Regulate PI3K/AKT Signaling"/>
</dbReference>
<dbReference type="BioGRID-ORCS" id="12487">
    <property type="hits" value="2 hits in 117 CRISPR screens"/>
</dbReference>
<dbReference type="PRO" id="PR:P31041"/>
<dbReference type="Proteomes" id="UP000000589">
    <property type="component" value="Chromosome 1"/>
</dbReference>
<dbReference type="RNAct" id="P31041">
    <property type="molecule type" value="protein"/>
</dbReference>
<dbReference type="Bgee" id="ENSMUSG00000026012">
    <property type="expression patterns" value="Expressed in thymus and 56 other cell types or tissues"/>
</dbReference>
<dbReference type="GO" id="GO:0009897">
    <property type="term" value="C:external side of plasma membrane"/>
    <property type="evidence" value="ECO:0000314"/>
    <property type="project" value="MGI"/>
</dbReference>
<dbReference type="GO" id="GO:0001772">
    <property type="term" value="C:immunological synapse"/>
    <property type="evidence" value="ECO:0000314"/>
    <property type="project" value="MGI"/>
</dbReference>
<dbReference type="GO" id="GO:0005886">
    <property type="term" value="C:plasma membrane"/>
    <property type="evidence" value="ECO:0000266"/>
    <property type="project" value="MGI"/>
</dbReference>
<dbReference type="GO" id="GO:0098636">
    <property type="term" value="C:protein complex involved in cell adhesion"/>
    <property type="evidence" value="ECO:0000266"/>
    <property type="project" value="MGI"/>
</dbReference>
<dbReference type="GO" id="GO:0019901">
    <property type="term" value="F:protein kinase binding"/>
    <property type="evidence" value="ECO:0000353"/>
    <property type="project" value="MGI"/>
</dbReference>
<dbReference type="GO" id="GO:0097190">
    <property type="term" value="P:apoptotic signaling pathway"/>
    <property type="evidence" value="ECO:0000314"/>
    <property type="project" value="MGI"/>
</dbReference>
<dbReference type="GO" id="GO:0035739">
    <property type="term" value="P:CD4-positive, alpha-beta T cell proliferation"/>
    <property type="evidence" value="ECO:0000314"/>
    <property type="project" value="MGI"/>
</dbReference>
<dbReference type="GO" id="GO:0006955">
    <property type="term" value="P:immune response"/>
    <property type="evidence" value="ECO:0007669"/>
    <property type="project" value="InterPro"/>
</dbReference>
<dbReference type="GO" id="GO:0010629">
    <property type="term" value="P:negative regulation of gene expression"/>
    <property type="evidence" value="ECO:0007669"/>
    <property type="project" value="Ensembl"/>
</dbReference>
<dbReference type="GO" id="GO:0045060">
    <property type="term" value="P:negative thymic T cell selection"/>
    <property type="evidence" value="ECO:0000315"/>
    <property type="project" value="MGI"/>
</dbReference>
<dbReference type="GO" id="GO:0043491">
    <property type="term" value="P:phosphatidylinositol 3-kinase/protein kinase B signal transduction"/>
    <property type="evidence" value="ECO:0000314"/>
    <property type="project" value="MGI"/>
</dbReference>
<dbReference type="GO" id="GO:2000563">
    <property type="term" value="P:positive regulation of CD4-positive, alpha-beta T cell proliferation"/>
    <property type="evidence" value="ECO:0000314"/>
    <property type="project" value="MGI"/>
</dbReference>
<dbReference type="GO" id="GO:0002863">
    <property type="term" value="P:positive regulation of inflammatory response to antigenic stimulus"/>
    <property type="evidence" value="ECO:0000315"/>
    <property type="project" value="MGI"/>
</dbReference>
<dbReference type="GO" id="GO:0032733">
    <property type="term" value="P:positive regulation of interleukin-10 production"/>
    <property type="evidence" value="ECO:0000250"/>
    <property type="project" value="UniProtKB"/>
</dbReference>
<dbReference type="GO" id="GO:0032743">
    <property type="term" value="P:positive regulation of interleukin-2 production"/>
    <property type="evidence" value="ECO:0000315"/>
    <property type="project" value="MGI"/>
</dbReference>
<dbReference type="GO" id="GO:0032753">
    <property type="term" value="P:positive regulation of interleukin-4 production"/>
    <property type="evidence" value="ECO:0000250"/>
    <property type="project" value="UniProtKB"/>
</dbReference>
<dbReference type="GO" id="GO:0048304">
    <property type="term" value="P:positive regulation of isotype switching to IgG isotypes"/>
    <property type="evidence" value="ECO:0000315"/>
    <property type="project" value="MGI"/>
</dbReference>
<dbReference type="GO" id="GO:0045840">
    <property type="term" value="P:positive regulation of mitotic nuclear division"/>
    <property type="evidence" value="ECO:0000250"/>
    <property type="project" value="UniProtKB"/>
</dbReference>
<dbReference type="GO" id="GO:0051897">
    <property type="term" value="P:positive regulation of phosphatidylinositol 3-kinase/protein kinase B signal transduction"/>
    <property type="evidence" value="ECO:0000314"/>
    <property type="project" value="MGI"/>
</dbReference>
<dbReference type="GO" id="GO:0042102">
    <property type="term" value="P:positive regulation of T cell proliferation"/>
    <property type="evidence" value="ECO:0000314"/>
    <property type="project" value="MGI"/>
</dbReference>
<dbReference type="GO" id="GO:0045944">
    <property type="term" value="P:positive regulation of transcription by RNA polymerase II"/>
    <property type="evidence" value="ECO:0000316"/>
    <property type="project" value="MGI"/>
</dbReference>
<dbReference type="GO" id="GO:0045589">
    <property type="term" value="P:regulation of regulatory T cell differentiation"/>
    <property type="evidence" value="ECO:0000316"/>
    <property type="project" value="MGI"/>
</dbReference>
<dbReference type="GO" id="GO:0045066">
    <property type="term" value="P:regulatory T cell differentiation"/>
    <property type="evidence" value="ECO:0007669"/>
    <property type="project" value="Ensembl"/>
</dbReference>
<dbReference type="GO" id="GO:0031295">
    <property type="term" value="P:T cell costimulation"/>
    <property type="evidence" value="ECO:0000314"/>
    <property type="project" value="MGI"/>
</dbReference>
<dbReference type="GO" id="GO:0042098">
    <property type="term" value="P:T cell proliferation"/>
    <property type="evidence" value="ECO:0000314"/>
    <property type="project" value="MGI"/>
</dbReference>
<dbReference type="GO" id="GO:0050852">
    <property type="term" value="P:T cell receptor signaling pathway"/>
    <property type="evidence" value="ECO:0000315"/>
    <property type="project" value="MGI"/>
</dbReference>
<dbReference type="GO" id="GO:0006366">
    <property type="term" value="P:transcription by RNA polymerase II"/>
    <property type="evidence" value="ECO:0000316"/>
    <property type="project" value="MGI"/>
</dbReference>
<dbReference type="FunFam" id="2.60.40.10:FF:000716">
    <property type="entry name" value="T-cell-specific surface glycoprotein CD28"/>
    <property type="match status" value="1"/>
</dbReference>
<dbReference type="Gene3D" id="2.60.40.10">
    <property type="entry name" value="Immunoglobulins"/>
    <property type="match status" value="1"/>
</dbReference>
<dbReference type="InterPro" id="IPR008093">
    <property type="entry name" value="CD28"/>
</dbReference>
<dbReference type="InterPro" id="IPR040216">
    <property type="entry name" value="CTLA4/CD28"/>
</dbReference>
<dbReference type="InterPro" id="IPR036179">
    <property type="entry name" value="Ig-like_dom_sf"/>
</dbReference>
<dbReference type="InterPro" id="IPR013783">
    <property type="entry name" value="Ig-like_fold"/>
</dbReference>
<dbReference type="InterPro" id="IPR013106">
    <property type="entry name" value="Ig_V-set"/>
</dbReference>
<dbReference type="PANTHER" id="PTHR11494">
    <property type="entry name" value="CYTOTOXIC T-LYMPHOCYTE PROTEIN"/>
    <property type="match status" value="1"/>
</dbReference>
<dbReference type="PANTHER" id="PTHR11494:SF7">
    <property type="entry name" value="T-CELL-SPECIFIC SURFACE GLYCOPROTEIN CD28"/>
    <property type="match status" value="1"/>
</dbReference>
<dbReference type="Pfam" id="PF07686">
    <property type="entry name" value="V-set"/>
    <property type="match status" value="1"/>
</dbReference>
<dbReference type="PRINTS" id="PR01717">
    <property type="entry name" value="CD28ANTIGEN"/>
</dbReference>
<dbReference type="SUPFAM" id="SSF48726">
    <property type="entry name" value="Immunoglobulin"/>
    <property type="match status" value="1"/>
</dbReference>
<gene>
    <name type="primary">Cd28</name>
</gene>
<proteinExistence type="evidence at protein level"/>
<sequence length="218" mass="25243">MTLRLLFLALNFFSVQVTENKILVKQSPLLVVDSNEVSLSCRYSYNLLAKEFRASLYKGVNSDVEVCVGNGNFTYQPQFRSNAEFNCDGDFDNETVTFRLWNLHVNHTDIYFCKIEFMYPPPYLDNERSNGTIIHIKEKHLCHTQSSPKLFWALVVVAGVLFCYGLLVTVALCVIWTNSRRNRLLQSDYMNMTPRRPGLTRKPYQPYAPARDFAAYRP</sequence>
<organism>
    <name type="scientific">Mus musculus</name>
    <name type="common">Mouse</name>
    <dbReference type="NCBI Taxonomy" id="10090"/>
    <lineage>
        <taxon>Eukaryota</taxon>
        <taxon>Metazoa</taxon>
        <taxon>Chordata</taxon>
        <taxon>Craniata</taxon>
        <taxon>Vertebrata</taxon>
        <taxon>Euteleostomi</taxon>
        <taxon>Mammalia</taxon>
        <taxon>Eutheria</taxon>
        <taxon>Euarchontoglires</taxon>
        <taxon>Glires</taxon>
        <taxon>Rodentia</taxon>
        <taxon>Myomorpha</taxon>
        <taxon>Muroidea</taxon>
        <taxon>Muridae</taxon>
        <taxon>Murinae</taxon>
        <taxon>Mus</taxon>
        <taxon>Mus</taxon>
    </lineage>
</organism>
<reference key="1">
    <citation type="journal article" date="1990" name="J. Immunol.">
        <title>The murine homologue of the T lymphocyte antigen CD28. Molecular cloning and cell surface expression.</title>
        <authorList>
            <person name="Gross J.A."/>
            <person name="St John T."/>
            <person name="Allison J.P."/>
        </authorList>
    </citation>
    <scope>NUCLEOTIDE SEQUENCE [MRNA]</scope>
</reference>
<reference key="2">
    <citation type="journal article" date="2009" name="PLoS Biol.">
        <title>Lineage-specific biology revealed by a finished genome assembly of the mouse.</title>
        <authorList>
            <person name="Church D.M."/>
            <person name="Goodstadt L."/>
            <person name="Hillier L.W."/>
            <person name="Zody M.C."/>
            <person name="Goldstein S."/>
            <person name="She X."/>
            <person name="Bult C.J."/>
            <person name="Agarwala R."/>
            <person name="Cherry J.L."/>
            <person name="DiCuccio M."/>
            <person name="Hlavina W."/>
            <person name="Kapustin Y."/>
            <person name="Meric P."/>
            <person name="Maglott D."/>
            <person name="Birtle Z."/>
            <person name="Marques A.C."/>
            <person name="Graves T."/>
            <person name="Zhou S."/>
            <person name="Teague B."/>
            <person name="Potamousis K."/>
            <person name="Churas C."/>
            <person name="Place M."/>
            <person name="Herschleb J."/>
            <person name="Runnheim R."/>
            <person name="Forrest D."/>
            <person name="Amos-Landgraf J."/>
            <person name="Schwartz D.C."/>
            <person name="Cheng Z."/>
            <person name="Lindblad-Toh K."/>
            <person name="Eichler E.E."/>
            <person name="Ponting C.P."/>
        </authorList>
    </citation>
    <scope>NUCLEOTIDE SEQUENCE [LARGE SCALE GENOMIC DNA]</scope>
    <source>
        <strain>C57BL/6J</strain>
    </source>
</reference>
<reference key="3">
    <citation type="submission" date="2005-07" db="EMBL/GenBank/DDBJ databases">
        <authorList>
            <person name="Mural R.J."/>
            <person name="Adams M.D."/>
            <person name="Myers E.W."/>
            <person name="Smith H.O."/>
            <person name="Venter J.C."/>
        </authorList>
    </citation>
    <scope>NUCLEOTIDE SEQUENCE [LARGE SCALE GENOMIC DNA]</scope>
</reference>
<reference key="4">
    <citation type="journal article" date="2004" name="Genome Res.">
        <title>The status, quality, and expansion of the NIH full-length cDNA project: the Mammalian Gene Collection (MGC).</title>
        <authorList>
            <consortium name="The MGC Project Team"/>
        </authorList>
    </citation>
    <scope>NUCLEOTIDE SEQUENCE [LARGE SCALE MRNA]</scope>
    <source>
        <strain>C57BL/6J</strain>
        <tissue>Thymus</tissue>
    </source>
</reference>
<reference key="5">
    <citation type="journal article" date="1991" name="J. Immunol.">
        <title>CTLA-4 and CD28 activated lymphocyte molecules are closely related in both mouse and human as to sequence, message expression, gene structure, and chromosomal location.</title>
        <authorList>
            <person name="Harper K."/>
            <person name="Balzano C."/>
            <person name="Rouvier E."/>
            <person name="Mattei M.-G."/>
            <person name="Luciani M.-F."/>
            <person name="Golstein P."/>
        </authorList>
    </citation>
    <scope>NUCLEOTIDE SEQUENCE [MRNA] OF 156-218</scope>
</reference>
<reference key="6">
    <citation type="journal article" date="1993" name="Science">
        <title>Differential T cell costimulatory requirements in CD28-deficient mice.</title>
        <authorList>
            <person name="Shahinian A."/>
            <person name="Pfeffer K."/>
            <person name="Lee K.P."/>
            <person name="Kuendig T.M."/>
            <person name="Kishihara K."/>
            <person name="Wakeham A."/>
            <person name="Kawai K."/>
            <person name="Ohashi P.S."/>
            <person name="Thompson C.B."/>
            <person name="Mak T.W."/>
        </authorList>
    </citation>
    <scope>FUNCTION</scope>
    <scope>DISRUPTION PHENOTYPE</scope>
</reference>
<reference key="7">
    <citation type="journal article" date="2016" name="Sci. Signal.">
        <title>Binding of the cytoplasmic domain of CD28 to the plasma membrane inhibits Lck recruitment and signaling.</title>
        <authorList>
            <person name="Dobbins J."/>
            <person name="Gagnon E."/>
            <person name="Godec J."/>
            <person name="Pyrdol J."/>
            <person name="Vignali D.A."/>
            <person name="Sharpe A.H."/>
            <person name="Wucherpfennig K.W."/>
        </authorList>
    </citation>
    <scope>PHOSPHORYLATION AT TYR-207</scope>
    <scope>SUBCELLULAR LOCATION</scope>
    <scope>SUBUNIT</scope>
</reference>
<evidence type="ECO:0000250" key="1"/>
<evidence type="ECO:0000250" key="2">
    <source>
        <dbReference type="UniProtKB" id="P10747"/>
    </source>
</evidence>
<evidence type="ECO:0000255" key="3"/>
<evidence type="ECO:0000269" key="4">
    <source>
    </source>
</evidence>
<evidence type="ECO:0000269" key="5">
    <source>
    </source>
</evidence>
<evidence type="ECO:0000305" key="6"/>
<evidence type="ECO:0007829" key="7">
    <source>
        <dbReference type="PDB" id="2NAE"/>
    </source>
</evidence>
<name>CD28_MOUSE</name>
<keyword id="KW-0002">3D-structure</keyword>
<keyword id="KW-1003">Cell membrane</keyword>
<keyword id="KW-1015">Disulfide bond</keyword>
<keyword id="KW-0325">Glycoprotein</keyword>
<keyword id="KW-0393">Immunoglobulin domain</keyword>
<keyword id="KW-0472">Membrane</keyword>
<keyword id="KW-0597">Phosphoprotein</keyword>
<keyword id="KW-0675">Receptor</keyword>
<keyword id="KW-1185">Reference proteome</keyword>
<keyword id="KW-0732">Signal</keyword>
<keyword id="KW-0812">Transmembrane</keyword>
<keyword id="KW-1133">Transmembrane helix</keyword>
<feature type="signal peptide" evidence="1">
    <location>
        <begin position="1"/>
        <end position="19"/>
    </location>
</feature>
<feature type="chain" id="PRO_0000014653" description="T-cell-specific surface glycoprotein CD28">
    <location>
        <begin position="20"/>
        <end position="218"/>
    </location>
</feature>
<feature type="topological domain" description="Extracellular" evidence="3">
    <location>
        <begin position="20"/>
        <end position="150"/>
    </location>
</feature>
<feature type="transmembrane region" description="Helical" evidence="3">
    <location>
        <begin position="151"/>
        <end position="177"/>
    </location>
</feature>
<feature type="topological domain" description="Cytoplasmic" evidence="3">
    <location>
        <begin position="178"/>
        <end position="218"/>
    </location>
</feature>
<feature type="domain" description="Ig-like V-type">
    <location>
        <begin position="29"/>
        <end position="138"/>
    </location>
</feature>
<feature type="modified residue" description="Phosphoserine" evidence="2">
    <location>
        <position position="187"/>
    </location>
</feature>
<feature type="modified residue" description="Phosphotyrosine" evidence="2">
    <location>
        <position position="189"/>
    </location>
</feature>
<feature type="modified residue" description="Phosphotyrosine" evidence="4">
    <location>
        <position position="207"/>
    </location>
</feature>
<feature type="glycosylation site" description="N-linked (GlcNAc...) asparagine" evidence="3">
    <location>
        <position position="72"/>
    </location>
</feature>
<feature type="glycosylation site" description="N-linked (GlcNAc...) asparagine" evidence="3">
    <location>
        <position position="93"/>
    </location>
</feature>
<feature type="glycosylation site" description="N-linked (GlcNAc...) asparagine" evidence="3">
    <location>
        <position position="106"/>
    </location>
</feature>
<feature type="glycosylation site" description="N-linked (GlcNAc...) asparagine" evidence="3">
    <location>
        <position position="130"/>
    </location>
</feature>
<feature type="disulfide bond" evidence="2">
    <location>
        <begin position="41"/>
        <end position="113"/>
    </location>
</feature>
<feature type="disulfide bond" evidence="2">
    <location>
        <begin position="67"/>
        <end position="87"/>
    </location>
</feature>
<feature type="sequence conflict" description="In Ref. 1; AAA37395." evidence="6" ref="1">
    <original>SDY</original>
    <variation>VTT</variation>
    <location>
        <begin position="187"/>
        <end position="189"/>
    </location>
</feature>
<feature type="strand" evidence="7">
    <location>
        <begin position="185"/>
        <end position="187"/>
    </location>
</feature>
<feature type="turn" evidence="7">
    <location>
        <begin position="214"/>
        <end position="216"/>
    </location>
</feature>